<organism>
    <name type="scientific">Listeria welshimeri serovar 6b (strain ATCC 35897 / DSM 20650 / CCUG 15529 / CIP 8149 / NCTC 11857 / SLCC 5334 / V8)</name>
    <dbReference type="NCBI Taxonomy" id="386043"/>
    <lineage>
        <taxon>Bacteria</taxon>
        <taxon>Bacillati</taxon>
        <taxon>Bacillota</taxon>
        <taxon>Bacilli</taxon>
        <taxon>Bacillales</taxon>
        <taxon>Listeriaceae</taxon>
        <taxon>Listeria</taxon>
    </lineage>
</organism>
<proteinExistence type="inferred from homology"/>
<dbReference type="EMBL" id="AM263198">
    <property type="protein sequence ID" value="CAK21976.1"/>
    <property type="molecule type" value="Genomic_DNA"/>
</dbReference>
<dbReference type="RefSeq" id="WP_011703280.1">
    <property type="nucleotide sequence ID" value="NC_008555.1"/>
</dbReference>
<dbReference type="SMR" id="A0ALU4"/>
<dbReference type="STRING" id="386043.lwe2558"/>
<dbReference type="GeneID" id="61190482"/>
<dbReference type="KEGG" id="lwe:lwe2558"/>
<dbReference type="eggNOG" id="COG0099">
    <property type="taxonomic scope" value="Bacteria"/>
</dbReference>
<dbReference type="HOGENOM" id="CLU_103849_1_1_9"/>
<dbReference type="OrthoDB" id="9803610at2"/>
<dbReference type="Proteomes" id="UP000000779">
    <property type="component" value="Chromosome"/>
</dbReference>
<dbReference type="GO" id="GO:0005829">
    <property type="term" value="C:cytosol"/>
    <property type="evidence" value="ECO:0007669"/>
    <property type="project" value="TreeGrafter"/>
</dbReference>
<dbReference type="GO" id="GO:0015935">
    <property type="term" value="C:small ribosomal subunit"/>
    <property type="evidence" value="ECO:0007669"/>
    <property type="project" value="TreeGrafter"/>
</dbReference>
<dbReference type="GO" id="GO:0019843">
    <property type="term" value="F:rRNA binding"/>
    <property type="evidence" value="ECO:0007669"/>
    <property type="project" value="UniProtKB-UniRule"/>
</dbReference>
<dbReference type="GO" id="GO:0003735">
    <property type="term" value="F:structural constituent of ribosome"/>
    <property type="evidence" value="ECO:0007669"/>
    <property type="project" value="InterPro"/>
</dbReference>
<dbReference type="GO" id="GO:0000049">
    <property type="term" value="F:tRNA binding"/>
    <property type="evidence" value="ECO:0007669"/>
    <property type="project" value="UniProtKB-UniRule"/>
</dbReference>
<dbReference type="GO" id="GO:0006412">
    <property type="term" value="P:translation"/>
    <property type="evidence" value="ECO:0007669"/>
    <property type="project" value="UniProtKB-UniRule"/>
</dbReference>
<dbReference type="FunFam" id="1.10.8.50:FF:000001">
    <property type="entry name" value="30S ribosomal protein S13"/>
    <property type="match status" value="1"/>
</dbReference>
<dbReference type="FunFam" id="4.10.910.10:FF:000001">
    <property type="entry name" value="30S ribosomal protein S13"/>
    <property type="match status" value="1"/>
</dbReference>
<dbReference type="Gene3D" id="1.10.8.50">
    <property type="match status" value="1"/>
</dbReference>
<dbReference type="Gene3D" id="4.10.910.10">
    <property type="entry name" value="30s ribosomal protein s13, domain 2"/>
    <property type="match status" value="1"/>
</dbReference>
<dbReference type="HAMAP" id="MF_01315">
    <property type="entry name" value="Ribosomal_uS13"/>
    <property type="match status" value="1"/>
</dbReference>
<dbReference type="InterPro" id="IPR027437">
    <property type="entry name" value="Rbsml_uS13_C"/>
</dbReference>
<dbReference type="InterPro" id="IPR001892">
    <property type="entry name" value="Ribosomal_uS13"/>
</dbReference>
<dbReference type="InterPro" id="IPR010979">
    <property type="entry name" value="Ribosomal_uS13-like_H2TH"/>
</dbReference>
<dbReference type="InterPro" id="IPR019980">
    <property type="entry name" value="Ribosomal_uS13_bac-type"/>
</dbReference>
<dbReference type="InterPro" id="IPR018269">
    <property type="entry name" value="Ribosomal_uS13_CS"/>
</dbReference>
<dbReference type="NCBIfam" id="TIGR03631">
    <property type="entry name" value="uS13_bact"/>
    <property type="match status" value="1"/>
</dbReference>
<dbReference type="PANTHER" id="PTHR10871">
    <property type="entry name" value="30S RIBOSOMAL PROTEIN S13/40S RIBOSOMAL PROTEIN S18"/>
    <property type="match status" value="1"/>
</dbReference>
<dbReference type="PANTHER" id="PTHR10871:SF1">
    <property type="entry name" value="SMALL RIBOSOMAL SUBUNIT PROTEIN US13M"/>
    <property type="match status" value="1"/>
</dbReference>
<dbReference type="Pfam" id="PF00416">
    <property type="entry name" value="Ribosomal_S13"/>
    <property type="match status" value="1"/>
</dbReference>
<dbReference type="PIRSF" id="PIRSF002134">
    <property type="entry name" value="Ribosomal_S13"/>
    <property type="match status" value="1"/>
</dbReference>
<dbReference type="SUPFAM" id="SSF46946">
    <property type="entry name" value="S13-like H2TH domain"/>
    <property type="match status" value="1"/>
</dbReference>
<dbReference type="PROSITE" id="PS00646">
    <property type="entry name" value="RIBOSOMAL_S13_1"/>
    <property type="match status" value="1"/>
</dbReference>
<dbReference type="PROSITE" id="PS50159">
    <property type="entry name" value="RIBOSOMAL_S13_2"/>
    <property type="match status" value="1"/>
</dbReference>
<accession>A0ALU4</accession>
<sequence length="121" mass="13668">MARIAGVDVPREKRIVISLTYIYGIGKQTASEVLAEAGVSEDTRTRDLTEEELGKIREILDRIKVEGDLRREVNLNIKRLIEIGSYRGMRHRRGLPVRGQNTKNNARTRKGPSKTVAGKKK</sequence>
<evidence type="ECO:0000255" key="1">
    <source>
        <dbReference type="HAMAP-Rule" id="MF_01315"/>
    </source>
</evidence>
<evidence type="ECO:0000256" key="2">
    <source>
        <dbReference type="SAM" id="MobiDB-lite"/>
    </source>
</evidence>
<evidence type="ECO:0000305" key="3"/>
<protein>
    <recommendedName>
        <fullName evidence="1">Small ribosomal subunit protein uS13</fullName>
    </recommendedName>
    <alternativeName>
        <fullName evidence="3">30S ribosomal protein S13</fullName>
    </alternativeName>
</protein>
<feature type="chain" id="PRO_0000306638" description="Small ribosomal subunit protein uS13">
    <location>
        <begin position="1"/>
        <end position="121"/>
    </location>
</feature>
<feature type="region of interest" description="Disordered" evidence="2">
    <location>
        <begin position="91"/>
        <end position="121"/>
    </location>
</feature>
<feature type="compositionally biased region" description="Basic residues" evidence="2">
    <location>
        <begin position="106"/>
        <end position="121"/>
    </location>
</feature>
<keyword id="KW-0687">Ribonucleoprotein</keyword>
<keyword id="KW-0689">Ribosomal protein</keyword>
<keyword id="KW-0694">RNA-binding</keyword>
<keyword id="KW-0699">rRNA-binding</keyword>
<keyword id="KW-0820">tRNA-binding</keyword>
<gene>
    <name evidence="1" type="primary">rpsM</name>
    <name type="ordered locus">lwe2558</name>
</gene>
<comment type="function">
    <text evidence="1">Located at the top of the head of the 30S subunit, it contacts several helices of the 16S rRNA. In the 70S ribosome it contacts the 23S rRNA (bridge B1a) and protein L5 of the 50S subunit (bridge B1b), connecting the 2 subunits; these bridges are implicated in subunit movement. Contacts the tRNAs in the A and P-sites.</text>
</comment>
<comment type="subunit">
    <text evidence="1">Part of the 30S ribosomal subunit. Forms a loose heterodimer with protein S19. Forms two bridges to the 50S subunit in the 70S ribosome.</text>
</comment>
<comment type="similarity">
    <text evidence="1">Belongs to the universal ribosomal protein uS13 family.</text>
</comment>
<name>RS13_LISW6</name>
<reference key="1">
    <citation type="journal article" date="2006" name="J. Bacteriol.">
        <title>Whole-genome sequence of Listeria welshimeri reveals common steps in genome reduction with Listeria innocua as compared to Listeria monocytogenes.</title>
        <authorList>
            <person name="Hain T."/>
            <person name="Steinweg C."/>
            <person name="Kuenne C.T."/>
            <person name="Billion A."/>
            <person name="Ghai R."/>
            <person name="Chatterjee S.S."/>
            <person name="Domann E."/>
            <person name="Kaerst U."/>
            <person name="Goesmann A."/>
            <person name="Bekel T."/>
            <person name="Bartels D."/>
            <person name="Kaiser O."/>
            <person name="Meyer F."/>
            <person name="Puehler A."/>
            <person name="Weisshaar B."/>
            <person name="Wehland J."/>
            <person name="Liang C."/>
            <person name="Dandekar T."/>
            <person name="Lampidis R."/>
            <person name="Kreft J."/>
            <person name="Goebel W."/>
            <person name="Chakraborty T."/>
        </authorList>
    </citation>
    <scope>NUCLEOTIDE SEQUENCE [LARGE SCALE GENOMIC DNA]</scope>
    <source>
        <strain>ATCC 35897 / DSM 20650 / CCUG 15529 / CIP 8149 / NCTC 11857 / SLCC 5334 / V8</strain>
    </source>
</reference>